<protein>
    <recommendedName>
        <fullName>Dual specificity protein phosphatase 6</fullName>
        <ecNumber>3.1.3.16</ecNumber>
        <ecNumber>3.1.3.48</ecNumber>
    </recommendedName>
    <alternativeName>
        <fullName>Dual specificity protein phosphatase PYST1</fullName>
    </alternativeName>
    <alternativeName>
        <fullName>Mitogen-activated protein kinase phosphatase 3</fullName>
        <shortName>MAP kinase phosphatase 3</shortName>
        <shortName>MKP-3</shortName>
    </alternativeName>
</protein>
<keyword id="KW-0002">3D-structure</keyword>
<keyword id="KW-0025">Alternative splicing</keyword>
<keyword id="KW-0963">Cytoplasm</keyword>
<keyword id="KW-0225">Disease variant</keyword>
<keyword id="KW-0378">Hydrolase</keyword>
<keyword id="KW-1016">Hypogonadotropic hypogonadism</keyword>
<keyword id="KW-0956">Kallmann syndrome</keyword>
<keyword id="KW-0904">Protein phosphatase</keyword>
<keyword id="KW-1267">Proteomics identification</keyword>
<keyword id="KW-1185">Reference proteome</keyword>
<keyword id="KW-0832">Ubl conjugation</keyword>
<evidence type="ECO:0000250" key="1">
    <source>
        <dbReference type="UniProtKB" id="Q9DBB1"/>
    </source>
</evidence>
<evidence type="ECO:0000255" key="2">
    <source>
        <dbReference type="PROSITE-ProRule" id="PRU00160"/>
    </source>
</evidence>
<evidence type="ECO:0000255" key="3">
    <source>
        <dbReference type="PROSITE-ProRule" id="PRU00173"/>
    </source>
</evidence>
<evidence type="ECO:0000256" key="4">
    <source>
        <dbReference type="SAM" id="MobiDB-lite"/>
    </source>
</evidence>
<evidence type="ECO:0000269" key="5">
    <source>
    </source>
</evidence>
<evidence type="ECO:0000269" key="6">
    <source>
    </source>
</evidence>
<evidence type="ECO:0000269" key="7">
    <source>
    </source>
</evidence>
<evidence type="ECO:0000269" key="8">
    <source>
    </source>
</evidence>
<evidence type="ECO:0000269" key="9">
    <source>
    </source>
</evidence>
<evidence type="ECO:0000269" key="10">
    <source>
    </source>
</evidence>
<evidence type="ECO:0000269" key="11">
    <source>
    </source>
</evidence>
<evidence type="ECO:0000269" key="12">
    <source ref="3"/>
</evidence>
<evidence type="ECO:0000303" key="13">
    <source>
    </source>
</evidence>
<evidence type="ECO:0000305" key="14"/>
<evidence type="ECO:0007829" key="15">
    <source>
        <dbReference type="PDB" id="1HZM"/>
    </source>
</evidence>
<evidence type="ECO:0007829" key="16">
    <source>
        <dbReference type="PDB" id="1MKP"/>
    </source>
</evidence>
<feature type="chain" id="PRO_0000094804" description="Dual specificity protein phosphatase 6">
    <location>
        <begin position="1"/>
        <end position="381"/>
    </location>
</feature>
<feature type="domain" description="Rhodanese" evidence="3">
    <location>
        <begin position="30"/>
        <end position="148"/>
    </location>
</feature>
<feature type="domain" description="Tyrosine-protein phosphatase" evidence="2">
    <location>
        <begin position="206"/>
        <end position="349"/>
    </location>
</feature>
<feature type="region of interest" description="Disordered" evidence="4">
    <location>
        <begin position="176"/>
        <end position="203"/>
    </location>
</feature>
<feature type="compositionally biased region" description="Polar residues" evidence="4">
    <location>
        <begin position="189"/>
        <end position="203"/>
    </location>
</feature>
<feature type="active site" description="Phosphocysteine intermediate" evidence="2 5">
    <location>
        <position position="293"/>
    </location>
</feature>
<feature type="splice variant" id="VSP_005137" description="In isoform 2." evidence="13">
    <location>
        <begin position="134"/>
        <end position="279"/>
    </location>
</feature>
<feature type="sequence variant" id="VAR_069943" description="In HH19; dbSNP:rs587776978." evidence="6">
    <original>F</original>
    <variation>I</variation>
    <location>
        <position position="77"/>
    </location>
</feature>
<feature type="sequence variant" id="VAR_015113" description="In dbSNP:rs2279574." evidence="10 11 12">
    <original>V</original>
    <variation>L</variation>
    <location>
        <position position="114"/>
    </location>
</feature>
<feature type="sequence variant" id="VAR_051750" description="In dbSNP:rs770087.">
    <original>S</original>
    <variation>A</variation>
    <location>
        <position position="144"/>
    </location>
</feature>
<feature type="sequence variant" id="VAR_069944" description="In HH19; the patient carries a second mutation in the HH-associated gene FGFR1; dbSNP:rs139318648." evidence="6">
    <original>S</original>
    <variation>F</variation>
    <location>
        <position position="182"/>
    </location>
</feature>
<feature type="sequence variant" id="VAR_069945" description="In HH19; dbSNP:rs143946794." evidence="6">
    <original>N</original>
    <variation>S</variation>
    <location>
        <position position="189"/>
    </location>
</feature>
<feature type="sequence variant" id="VAR_051751" description="In dbSNP:rs12828557.">
    <original>N</original>
    <variation>I</variation>
    <location>
        <position position="313"/>
    </location>
</feature>
<feature type="sequence variant" id="VAR_069946" description="In HH19; the patient carries a second variant in the HH-associated gene SPRY4; dbSNP:rs146089505." evidence="6">
    <original>T</original>
    <variation>M</variation>
    <location>
        <position position="346"/>
    </location>
</feature>
<feature type="strand" evidence="15">
    <location>
        <begin position="7"/>
        <end position="12"/>
    </location>
</feature>
<feature type="strand" evidence="15">
    <location>
        <begin position="15"/>
        <end position="18"/>
    </location>
</feature>
<feature type="helix" evidence="15">
    <location>
        <begin position="23"/>
        <end position="29"/>
    </location>
</feature>
<feature type="strand" evidence="15">
    <location>
        <begin position="31"/>
        <end position="33"/>
    </location>
</feature>
<feature type="strand" evidence="15">
    <location>
        <begin position="35"/>
        <end position="37"/>
    </location>
</feature>
<feature type="helix" evidence="15">
    <location>
        <begin position="43"/>
        <end position="48"/>
    </location>
</feature>
<feature type="strand" evidence="15">
    <location>
        <begin position="50"/>
        <end position="52"/>
    </location>
</feature>
<feature type="helix" evidence="15">
    <location>
        <begin position="61"/>
        <end position="64"/>
    </location>
</feature>
<feature type="turn" evidence="15">
    <location>
        <begin position="73"/>
        <end position="76"/>
    </location>
</feature>
<feature type="helix" evidence="15">
    <location>
        <begin position="81"/>
        <end position="88"/>
    </location>
</feature>
<feature type="strand" evidence="15">
    <location>
        <begin position="95"/>
        <end position="97"/>
    </location>
</feature>
<feature type="strand" evidence="15">
    <location>
        <begin position="101"/>
        <end position="105"/>
    </location>
</feature>
<feature type="helix" evidence="15">
    <location>
        <begin position="114"/>
        <end position="124"/>
    </location>
</feature>
<feature type="helix" evidence="15">
    <location>
        <begin position="136"/>
        <end position="143"/>
    </location>
</feature>
<feature type="strand" evidence="15">
    <location>
        <begin position="149"/>
        <end position="152"/>
    </location>
</feature>
<feature type="strand" evidence="16">
    <location>
        <begin position="208"/>
        <end position="211"/>
    </location>
</feature>
<feature type="strand" evidence="16">
    <location>
        <begin position="214"/>
        <end position="217"/>
    </location>
</feature>
<feature type="helix" evidence="16">
    <location>
        <begin position="225"/>
        <end position="230"/>
    </location>
</feature>
<feature type="strand" evidence="16">
    <location>
        <begin position="233"/>
        <end position="238"/>
    </location>
</feature>
<feature type="strand" evidence="16">
    <location>
        <begin position="246"/>
        <end position="250"/>
    </location>
</feature>
<feature type="strand" evidence="16">
    <location>
        <begin position="253"/>
        <end position="257"/>
    </location>
</feature>
<feature type="helix" evidence="16">
    <location>
        <begin position="269"/>
        <end position="271"/>
    </location>
</feature>
<feature type="helix" evidence="16">
    <location>
        <begin position="272"/>
        <end position="284"/>
    </location>
</feature>
<feature type="strand" evidence="16">
    <location>
        <begin position="288"/>
        <end position="292"/>
    </location>
</feature>
<feature type="helix" evidence="16">
    <location>
        <begin position="298"/>
        <end position="312"/>
    </location>
</feature>
<feature type="helix" evidence="16">
    <location>
        <begin position="316"/>
        <end position="326"/>
    </location>
</feature>
<feature type="helix" evidence="16">
    <location>
        <begin position="337"/>
        <end position="345"/>
    </location>
</feature>
<sequence length="381" mass="42320">MIDTLRPVPFASEMAISKTVAWLNEQLELGNERLLLMDCRPQELYESSHIESAINVAIPGIMLRRLQKGNLPVRALFTRGEDRDRFTRRCGTDTVVLYDESSSDWNENTGGESVLGLLLKKLKDEGCRAFYLEGGFSKFQAEFSLHCETNLDGSCSSSSPPLPVLGLGGLRISSDSSSDIESDLDRDPNSATDSDGSPLSNSQPSFPVEILPFLYLGCAKDSTNLDVLEEFGIKYILNVTPNLPNLFENAGEFKYKQIPISDHWSQNLSQFFPEAISFIDEARGKNCGVLVHCLAGISRSVTVTVAYLMQKLNLSMNDAYDIVKMKKSNISPNFNFMGQLLDFERTLGLSSPCDNRVPAQQLYFTTPSNQNVYQVDSLQST</sequence>
<gene>
    <name type="primary">DUSP6</name>
    <name type="synonym">MKP3</name>
    <name type="synonym">PYST1</name>
</gene>
<dbReference type="EC" id="3.1.3.16"/>
<dbReference type="EC" id="3.1.3.48"/>
<dbReference type="EMBL" id="X93920">
    <property type="protein sequence ID" value="CAA63813.1"/>
    <property type="molecule type" value="mRNA"/>
</dbReference>
<dbReference type="EMBL" id="AB013601">
    <property type="protein sequence ID" value="BAA31968.1"/>
    <property type="molecule type" value="Genomic_DNA"/>
</dbReference>
<dbReference type="EMBL" id="AB013382">
    <property type="protein sequence ID" value="BAA34369.1"/>
    <property type="molecule type" value="mRNA"/>
</dbReference>
<dbReference type="EMBL" id="AB013602">
    <property type="protein sequence ID" value="BAA31969.1"/>
    <property type="molecule type" value="mRNA"/>
</dbReference>
<dbReference type="EMBL" id="BT006895">
    <property type="protein sequence ID" value="AAP35541.1"/>
    <property type="molecule type" value="mRNA"/>
</dbReference>
<dbReference type="EMBL" id="BC003143">
    <property type="protein sequence ID" value="AAH03143.1"/>
    <property type="molecule type" value="mRNA"/>
</dbReference>
<dbReference type="EMBL" id="BC003562">
    <property type="protein sequence ID" value="AAH03562.1"/>
    <property type="molecule type" value="mRNA"/>
</dbReference>
<dbReference type="EMBL" id="BC005047">
    <property type="protein sequence ID" value="AAH05047.1"/>
    <property type="molecule type" value="mRNA"/>
</dbReference>
<dbReference type="EMBL" id="BC037236">
    <property type="protein sequence ID" value="AAH37236.1"/>
    <property type="molecule type" value="mRNA"/>
</dbReference>
<dbReference type="CCDS" id="CCDS9033.1">
    <molecule id="Q16828-1"/>
</dbReference>
<dbReference type="CCDS" id="CCDS9034.1">
    <molecule id="Q16828-2"/>
</dbReference>
<dbReference type="RefSeq" id="NP_001937.2">
    <molecule id="Q16828-1"/>
    <property type="nucleotide sequence ID" value="NM_001946.3"/>
</dbReference>
<dbReference type="RefSeq" id="NP_073143.2">
    <molecule id="Q16828-2"/>
    <property type="nucleotide sequence ID" value="NM_022652.3"/>
</dbReference>
<dbReference type="PDB" id="1HZM">
    <property type="method" value="NMR"/>
    <property type="chains" value="A=1-154"/>
</dbReference>
<dbReference type="PDB" id="1MKP">
    <property type="method" value="X-ray"/>
    <property type="resolution" value="2.35 A"/>
    <property type="chains" value="A=205-347"/>
</dbReference>
<dbReference type="PDBsum" id="1HZM"/>
<dbReference type="PDBsum" id="1MKP"/>
<dbReference type="BMRB" id="Q16828"/>
<dbReference type="SMR" id="Q16828"/>
<dbReference type="BioGRID" id="108181">
    <property type="interactions" value="125"/>
</dbReference>
<dbReference type="ELM" id="Q16828"/>
<dbReference type="FunCoup" id="Q16828">
    <property type="interactions" value="2251"/>
</dbReference>
<dbReference type="IntAct" id="Q16828">
    <property type="interactions" value="45"/>
</dbReference>
<dbReference type="MINT" id="Q16828"/>
<dbReference type="STRING" id="9606.ENSP00000279488"/>
<dbReference type="BindingDB" id="Q16828"/>
<dbReference type="ChEMBL" id="CHEMBL1250381"/>
<dbReference type="DEPOD" id="DUSP6"/>
<dbReference type="iPTMnet" id="Q16828"/>
<dbReference type="PhosphoSitePlus" id="Q16828"/>
<dbReference type="BioMuta" id="DUSP6"/>
<dbReference type="DMDM" id="108860971"/>
<dbReference type="CPTAC" id="CPTAC-1564"/>
<dbReference type="jPOST" id="Q16828"/>
<dbReference type="MassIVE" id="Q16828"/>
<dbReference type="PaxDb" id="9606-ENSP00000279488"/>
<dbReference type="PeptideAtlas" id="Q16828"/>
<dbReference type="ProteomicsDB" id="61089">
    <molecule id="Q16828-1"/>
</dbReference>
<dbReference type="ProteomicsDB" id="61090">
    <molecule id="Q16828-2"/>
</dbReference>
<dbReference type="Antibodypedia" id="4315">
    <property type="antibodies" value="542 antibodies from 38 providers"/>
</dbReference>
<dbReference type="DNASU" id="1848"/>
<dbReference type="Ensembl" id="ENST00000279488.8">
    <molecule id="Q16828-1"/>
    <property type="protein sequence ID" value="ENSP00000279488.6"/>
    <property type="gene ID" value="ENSG00000139318.8"/>
</dbReference>
<dbReference type="Ensembl" id="ENST00000308385.6">
    <molecule id="Q16828-2"/>
    <property type="protein sequence ID" value="ENSP00000307835.6"/>
    <property type="gene ID" value="ENSG00000139318.8"/>
</dbReference>
<dbReference type="GeneID" id="1848"/>
<dbReference type="KEGG" id="hsa:1848"/>
<dbReference type="MANE-Select" id="ENST00000279488.8">
    <property type="protein sequence ID" value="ENSP00000279488.6"/>
    <property type="RefSeq nucleotide sequence ID" value="NM_001946.4"/>
    <property type="RefSeq protein sequence ID" value="NP_001937.2"/>
</dbReference>
<dbReference type="UCSC" id="uc001tay.5">
    <molecule id="Q16828-1"/>
    <property type="organism name" value="human"/>
</dbReference>
<dbReference type="AGR" id="HGNC:3072"/>
<dbReference type="CTD" id="1848"/>
<dbReference type="DisGeNET" id="1848"/>
<dbReference type="GeneCards" id="DUSP6"/>
<dbReference type="GeneReviews" id="DUSP6"/>
<dbReference type="HGNC" id="HGNC:3072">
    <property type="gene designation" value="DUSP6"/>
</dbReference>
<dbReference type="HPA" id="ENSG00000139318">
    <property type="expression patterns" value="Tissue enhanced (salivary)"/>
</dbReference>
<dbReference type="MalaCards" id="DUSP6"/>
<dbReference type="MIM" id="602748">
    <property type="type" value="gene"/>
</dbReference>
<dbReference type="MIM" id="615269">
    <property type="type" value="phenotype"/>
</dbReference>
<dbReference type="neXtProt" id="NX_Q16828"/>
<dbReference type="OpenTargets" id="ENSG00000139318"/>
<dbReference type="Orphanet" id="478">
    <property type="disease" value="Kallmann syndrome"/>
</dbReference>
<dbReference type="Orphanet" id="432">
    <property type="disease" value="Normosmic congenital hypogonadotropic hypogonadism"/>
</dbReference>
<dbReference type="PharmGKB" id="PA27529"/>
<dbReference type="VEuPathDB" id="HostDB:ENSG00000139318"/>
<dbReference type="eggNOG" id="KOG1717">
    <property type="taxonomic scope" value="Eukaryota"/>
</dbReference>
<dbReference type="GeneTree" id="ENSGT00940000158342"/>
<dbReference type="InParanoid" id="Q16828"/>
<dbReference type="OMA" id="GNDQRCI"/>
<dbReference type="OrthoDB" id="165342at2759"/>
<dbReference type="PAN-GO" id="Q16828">
    <property type="GO annotations" value="7 GO annotations based on evolutionary models"/>
</dbReference>
<dbReference type="PhylomeDB" id="Q16828"/>
<dbReference type="TreeFam" id="TF105122"/>
<dbReference type="BRENDA" id="3.1.3.16">
    <property type="organism ID" value="2681"/>
</dbReference>
<dbReference type="BRENDA" id="3.1.3.48">
    <property type="organism ID" value="2681"/>
</dbReference>
<dbReference type="PathwayCommons" id="Q16828"/>
<dbReference type="Reactome" id="R-HSA-112409">
    <property type="pathway name" value="RAF-independent MAPK1/3 activation"/>
</dbReference>
<dbReference type="Reactome" id="R-HSA-202670">
    <property type="pathway name" value="ERKs are inactivated"/>
</dbReference>
<dbReference type="Reactome" id="R-HSA-5675221">
    <property type="pathway name" value="Negative regulation of MAPK pathway"/>
</dbReference>
<dbReference type="Reactome" id="R-HSA-9652817">
    <property type="pathway name" value="Signaling by MAPK mutants"/>
</dbReference>
<dbReference type="SignaLink" id="Q16828"/>
<dbReference type="SIGNOR" id="Q16828"/>
<dbReference type="BioGRID-ORCS" id="1848">
    <property type="hits" value="23 hits in 1175 CRISPR screens"/>
</dbReference>
<dbReference type="ChiTaRS" id="DUSP6">
    <property type="organism name" value="human"/>
</dbReference>
<dbReference type="EvolutionaryTrace" id="Q16828"/>
<dbReference type="GeneWiki" id="DUSP6"/>
<dbReference type="GenomeRNAi" id="1848"/>
<dbReference type="Pharos" id="Q16828">
    <property type="development level" value="Tchem"/>
</dbReference>
<dbReference type="PRO" id="PR:Q16828"/>
<dbReference type="Proteomes" id="UP000005640">
    <property type="component" value="Chromosome 12"/>
</dbReference>
<dbReference type="RNAct" id="Q16828">
    <property type="molecule type" value="protein"/>
</dbReference>
<dbReference type="Bgee" id="ENSG00000139318">
    <property type="expression patterns" value="Expressed in parotid gland and 213 other cell types or tissues"/>
</dbReference>
<dbReference type="ExpressionAtlas" id="Q16828">
    <property type="expression patterns" value="baseline and differential"/>
</dbReference>
<dbReference type="GO" id="GO:0005737">
    <property type="term" value="C:cytoplasm"/>
    <property type="evidence" value="ECO:0000314"/>
    <property type="project" value="UniProtKB"/>
</dbReference>
<dbReference type="GO" id="GO:0005829">
    <property type="term" value="C:cytosol"/>
    <property type="evidence" value="ECO:0000314"/>
    <property type="project" value="HPA"/>
</dbReference>
<dbReference type="GO" id="GO:0005654">
    <property type="term" value="C:nucleoplasm"/>
    <property type="evidence" value="ECO:0000314"/>
    <property type="project" value="HPA"/>
</dbReference>
<dbReference type="GO" id="GO:0033550">
    <property type="term" value="F:MAP kinase tyrosine phosphatase activity"/>
    <property type="evidence" value="ECO:0000318"/>
    <property type="project" value="GO_Central"/>
</dbReference>
<dbReference type="GO" id="GO:0017017">
    <property type="term" value="F:MAP kinase tyrosine/serine/threonine phosphatase activity"/>
    <property type="evidence" value="ECO:0000314"/>
    <property type="project" value="UniProtKB"/>
</dbReference>
<dbReference type="GO" id="GO:0004722">
    <property type="term" value="F:protein serine/threonine phosphatase activity"/>
    <property type="evidence" value="ECO:0007669"/>
    <property type="project" value="UniProtKB-EC"/>
</dbReference>
<dbReference type="GO" id="GO:0004725">
    <property type="term" value="F:protein tyrosine phosphatase activity"/>
    <property type="evidence" value="ECO:0000304"/>
    <property type="project" value="Reactome"/>
</dbReference>
<dbReference type="GO" id="GO:0008138">
    <property type="term" value="F:protein tyrosine/serine/threonine phosphatase activity"/>
    <property type="evidence" value="ECO:0000304"/>
    <property type="project" value="Reactome"/>
</dbReference>
<dbReference type="GO" id="GO:0008330">
    <property type="term" value="F:protein tyrosine/threonine phosphatase activity"/>
    <property type="evidence" value="ECO:0000318"/>
    <property type="project" value="GO_Central"/>
</dbReference>
<dbReference type="GO" id="GO:0030154">
    <property type="term" value="P:cell differentiation"/>
    <property type="evidence" value="ECO:0007669"/>
    <property type="project" value="Ensembl"/>
</dbReference>
<dbReference type="GO" id="GO:0070371">
    <property type="term" value="P:ERK1 and ERK2 cascade"/>
    <property type="evidence" value="ECO:0000304"/>
    <property type="project" value="Reactome"/>
</dbReference>
<dbReference type="GO" id="GO:0000165">
    <property type="term" value="P:MAPK cascade"/>
    <property type="evidence" value="ECO:0000304"/>
    <property type="project" value="Reactome"/>
</dbReference>
<dbReference type="GO" id="GO:0070373">
    <property type="term" value="P:negative regulation of ERK1 and ERK2 cascade"/>
    <property type="evidence" value="ECO:0000315"/>
    <property type="project" value="UniProtKB"/>
</dbReference>
<dbReference type="GO" id="GO:0043409">
    <property type="term" value="P:negative regulation of MAPK cascade"/>
    <property type="evidence" value="ECO:0000314"/>
    <property type="project" value="UniProtKB"/>
</dbReference>
<dbReference type="GO" id="GO:0035335">
    <property type="term" value="P:peptidyl-tyrosine dephosphorylation"/>
    <property type="evidence" value="ECO:0000314"/>
    <property type="project" value="UniProtKB"/>
</dbReference>
<dbReference type="GO" id="GO:0043065">
    <property type="term" value="P:positive regulation of apoptotic process"/>
    <property type="evidence" value="ECO:0000314"/>
    <property type="project" value="UniProtKB"/>
</dbReference>
<dbReference type="GO" id="GO:0060420">
    <property type="term" value="P:regulation of heart growth"/>
    <property type="evidence" value="ECO:0000318"/>
    <property type="project" value="GO_Central"/>
</dbReference>
<dbReference type="GO" id="GO:0070848">
    <property type="term" value="P:response to growth factor"/>
    <property type="evidence" value="ECO:0007669"/>
    <property type="project" value="Ensembl"/>
</dbReference>
<dbReference type="GO" id="GO:0051409">
    <property type="term" value="P:response to nitrosative stress"/>
    <property type="evidence" value="ECO:0000270"/>
    <property type="project" value="UniProtKB"/>
</dbReference>
<dbReference type="GO" id="GO:0009410">
    <property type="term" value="P:response to xenobiotic stimulus"/>
    <property type="evidence" value="ECO:0007669"/>
    <property type="project" value="Ensembl"/>
</dbReference>
<dbReference type="GO" id="GO:0007165">
    <property type="term" value="P:signal transduction"/>
    <property type="evidence" value="ECO:0000318"/>
    <property type="project" value="GO_Central"/>
</dbReference>
<dbReference type="CDD" id="cd01446">
    <property type="entry name" value="DSP_MapKP"/>
    <property type="match status" value="1"/>
</dbReference>
<dbReference type="CDD" id="cd14566">
    <property type="entry name" value="DSP_MKP_classII"/>
    <property type="match status" value="1"/>
</dbReference>
<dbReference type="FunFam" id="3.90.190.10:FF:000011">
    <property type="entry name" value="Dual specificity phosphatase 6"/>
    <property type="match status" value="1"/>
</dbReference>
<dbReference type="FunFam" id="3.40.250.10:FF:000011">
    <property type="entry name" value="Dual specificity phosphatase 7"/>
    <property type="match status" value="1"/>
</dbReference>
<dbReference type="Gene3D" id="3.90.190.10">
    <property type="entry name" value="Protein tyrosine phosphatase superfamily"/>
    <property type="match status" value="1"/>
</dbReference>
<dbReference type="Gene3D" id="3.40.250.10">
    <property type="entry name" value="Rhodanese-like domain"/>
    <property type="match status" value="1"/>
</dbReference>
<dbReference type="IDEAL" id="IID00728"/>
<dbReference type="InterPro" id="IPR000340">
    <property type="entry name" value="Dual-sp_phosphatase_cat-dom"/>
</dbReference>
<dbReference type="InterPro" id="IPR008343">
    <property type="entry name" value="MKP"/>
</dbReference>
<dbReference type="InterPro" id="IPR029021">
    <property type="entry name" value="Prot-tyrosine_phosphatase-like"/>
</dbReference>
<dbReference type="InterPro" id="IPR001763">
    <property type="entry name" value="Rhodanese-like_dom"/>
</dbReference>
<dbReference type="InterPro" id="IPR036873">
    <property type="entry name" value="Rhodanese-like_dom_sf"/>
</dbReference>
<dbReference type="InterPro" id="IPR000387">
    <property type="entry name" value="Tyr_Pase_dom"/>
</dbReference>
<dbReference type="InterPro" id="IPR020422">
    <property type="entry name" value="TYR_PHOSPHATASE_DUAL_dom"/>
</dbReference>
<dbReference type="PANTHER" id="PTHR10159">
    <property type="entry name" value="DUAL SPECIFICITY PROTEIN PHOSPHATASE"/>
    <property type="match status" value="1"/>
</dbReference>
<dbReference type="PANTHER" id="PTHR10159:SF45">
    <property type="entry name" value="DUAL SPECIFICITY PROTEIN PHOSPHATASE 6"/>
    <property type="match status" value="1"/>
</dbReference>
<dbReference type="Pfam" id="PF00782">
    <property type="entry name" value="DSPc"/>
    <property type="match status" value="1"/>
</dbReference>
<dbReference type="Pfam" id="PF00581">
    <property type="entry name" value="Rhodanese"/>
    <property type="match status" value="1"/>
</dbReference>
<dbReference type="PIRSF" id="PIRSF000939">
    <property type="entry name" value="MAPK_Ptase"/>
    <property type="match status" value="1"/>
</dbReference>
<dbReference type="PRINTS" id="PR01764">
    <property type="entry name" value="MAPKPHPHTASE"/>
</dbReference>
<dbReference type="SMART" id="SM00195">
    <property type="entry name" value="DSPc"/>
    <property type="match status" value="1"/>
</dbReference>
<dbReference type="SMART" id="SM00450">
    <property type="entry name" value="RHOD"/>
    <property type="match status" value="1"/>
</dbReference>
<dbReference type="SUPFAM" id="SSF52799">
    <property type="entry name" value="(Phosphotyrosine protein) phosphatases II"/>
    <property type="match status" value="1"/>
</dbReference>
<dbReference type="SUPFAM" id="SSF52821">
    <property type="entry name" value="Rhodanese/Cell cycle control phosphatase"/>
    <property type="match status" value="1"/>
</dbReference>
<dbReference type="PROSITE" id="PS50206">
    <property type="entry name" value="RHODANESE_3"/>
    <property type="match status" value="1"/>
</dbReference>
<dbReference type="PROSITE" id="PS50056">
    <property type="entry name" value="TYR_PHOSPHATASE_2"/>
    <property type="match status" value="1"/>
</dbReference>
<dbReference type="PROSITE" id="PS50054">
    <property type="entry name" value="TYR_PHOSPHATASE_DUAL"/>
    <property type="match status" value="1"/>
</dbReference>
<accession>Q16828</accession>
<accession>O75109</accession>
<accession>Q53Y75</accession>
<accession>Q9BSH6</accession>
<name>DUS6_HUMAN</name>
<organism>
    <name type="scientific">Homo sapiens</name>
    <name type="common">Human</name>
    <dbReference type="NCBI Taxonomy" id="9606"/>
    <lineage>
        <taxon>Eukaryota</taxon>
        <taxon>Metazoa</taxon>
        <taxon>Chordata</taxon>
        <taxon>Craniata</taxon>
        <taxon>Vertebrata</taxon>
        <taxon>Euteleostomi</taxon>
        <taxon>Mammalia</taxon>
        <taxon>Eutheria</taxon>
        <taxon>Euarchontoglires</taxon>
        <taxon>Primates</taxon>
        <taxon>Haplorrhini</taxon>
        <taxon>Catarrhini</taxon>
        <taxon>Hominidae</taxon>
        <taxon>Homo</taxon>
    </lineage>
</organism>
<reference key="1">
    <citation type="journal article" date="1996" name="EMBO J.">
        <title>Differential regulation of the MAP, SAP and RK/p38 kinases by Pyst1, a novel cytosolic dual-specificity phosphatase.</title>
        <authorList>
            <person name="Groom L.A."/>
            <person name="Sneddon A.A."/>
            <person name="Alessi D.R."/>
            <person name="Dowd S."/>
            <person name="Keyse S.M."/>
        </authorList>
    </citation>
    <scope>NUCLEOTIDE SEQUENCE [MRNA] (ISOFORM 1)</scope>
    <scope>FUNCTION</scope>
    <scope>SUBCELLULAR LOCATION</scope>
    <scope>VARIANT LEU-114</scope>
    <source>
        <tissue>Foreskin</tissue>
    </source>
</reference>
<reference key="2">
    <citation type="journal article" date="1998" name="Cytogenet. Cell Genet.">
        <title>Genomic analysis of DUSP6, a dual specificity MAP kinase phosphatase, in pancreatic cancer.</title>
        <authorList>
            <person name="Furukawa T."/>
            <person name="Yatsuoka T."/>
            <person name="Youssef E.M."/>
            <person name="Abe T."/>
            <person name="Yokoyama T."/>
            <person name="Fukushige S."/>
            <person name="Soeda E."/>
            <person name="Hoshi M."/>
            <person name="Hayashi Y."/>
            <person name="Sunamura M."/>
            <person name="Kobari M."/>
            <person name="Horii A."/>
        </authorList>
    </citation>
    <scope>NUCLEOTIDE SEQUENCE [GENOMIC DNA / MRNA] (ISOFORMS 1 AND 2)</scope>
    <scope>VARIANT LEU-114</scope>
    <source>
        <tissue>Liver</tissue>
    </source>
</reference>
<reference key="3">
    <citation type="submission" date="2003-05" db="EMBL/GenBank/DDBJ databases">
        <title>Cloning of human full-length CDSs in BD Creator(TM) system donor vector.</title>
        <authorList>
            <person name="Kalnine N."/>
            <person name="Chen X."/>
            <person name="Rolfs A."/>
            <person name="Halleck A."/>
            <person name="Hines L."/>
            <person name="Eisenstein S."/>
            <person name="Koundinya M."/>
            <person name="Raphael J."/>
            <person name="Moreira D."/>
            <person name="Kelley T."/>
            <person name="LaBaer J."/>
            <person name="Lin Y."/>
            <person name="Phelan M."/>
            <person name="Farmer A."/>
        </authorList>
    </citation>
    <scope>NUCLEOTIDE SEQUENCE [LARGE SCALE MRNA] (ISOFORM 1)</scope>
    <scope>VARIANT LEU-114</scope>
</reference>
<reference key="4">
    <citation type="journal article" date="2004" name="Genome Res.">
        <title>The status, quality, and expansion of the NIH full-length cDNA project: the Mammalian Gene Collection (MGC).</title>
        <authorList>
            <consortium name="The MGC Project Team"/>
        </authorList>
    </citation>
    <scope>NUCLEOTIDE SEQUENCE [LARGE SCALE MRNA] (ISOFORM 1)</scope>
    <source>
        <tissue>Colon</tissue>
        <tissue>Kidney</tissue>
        <tissue>Skin</tissue>
        <tissue>Stomach</tissue>
    </source>
</reference>
<reference key="5">
    <citation type="journal article" date="1999" name="Nat. Struct. Biol.">
        <title>Crystal structure of the MAPK phosphatase Pyst1 catalytic domain and implications for regulated activation.</title>
        <authorList>
            <person name="Stewart A.E."/>
            <person name="Dowd S."/>
            <person name="Keyse S.M."/>
            <person name="McDonald N.Q."/>
        </authorList>
    </citation>
    <scope>X-RAY CRYSTALLOGRAPHY (2.35 ANGSTROMS) OF 204-347</scope>
    <scope>ACTIVE SITE</scope>
</reference>
<reference key="6">
    <citation type="journal article" date="2013" name="Am. J. Hum. Genet.">
        <title>Mutations in FGF17, IL17RD, DUSP6, SPRY4, and FLRT3 are identified in individuals with congenital hypogonadotropic hypogonadism.</title>
        <authorList>
            <person name="Miraoui H."/>
            <person name="Dwyer A.A."/>
            <person name="Sykiotis G.P."/>
            <person name="Plummer L."/>
            <person name="Chung W."/>
            <person name="Feng B."/>
            <person name="Beenken A."/>
            <person name="Clarke J."/>
            <person name="Pers T.H."/>
            <person name="Dworzynski P."/>
            <person name="Keefe K."/>
            <person name="Niedziela M."/>
            <person name="Raivio T."/>
            <person name="Crowley W.F. Jr."/>
            <person name="Seminara S.B."/>
            <person name="Quinton R."/>
            <person name="Hughes V.A."/>
            <person name="Kumanov P."/>
            <person name="Young J."/>
            <person name="Yialamas M.A."/>
            <person name="Hall J.E."/>
            <person name="Van Vliet G."/>
            <person name="Chanoine J.P."/>
            <person name="Rubenstein J."/>
            <person name="Mohammadi M."/>
            <person name="Tsai P.S."/>
            <person name="Sidis Y."/>
            <person name="Lage K."/>
            <person name="Pitteloud N."/>
        </authorList>
    </citation>
    <scope>VARIANTS HH19 ILE-77; PHE-182; SER-189 AND MET-346</scope>
</reference>
<reference key="7">
    <citation type="journal article" date="2017" name="Elife">
        <title>A protein phosphatase network controls the temporal and spatial dynamics of differentiation commitment in human epidermis.</title>
        <authorList>
            <person name="Mishra A."/>
            <person name="Oules B."/>
            <person name="Pisco A.O."/>
            <person name="Ly T."/>
            <person name="Liakath-Ali K."/>
            <person name="Walko G."/>
            <person name="Viswanathan P."/>
            <person name="Tihy M."/>
            <person name="Nijjher J."/>
            <person name="Dunn S.J."/>
            <person name="Lamond A.I."/>
            <person name="Watt F.M."/>
        </authorList>
    </citation>
    <scope>TISSUE SPECIFICITY</scope>
    <scope>FUNCTION</scope>
</reference>
<reference key="8">
    <citation type="journal article" date="2020" name="Am. J. Hum. Genet.">
        <title>Enhanced MAPK1 function causes a neurodevelopmental disorder within the RASopathy clinical spectrum.</title>
        <authorList>
            <person name="Motta M."/>
            <person name="Pannone L."/>
            <person name="Pantaleoni F."/>
            <person name="Bocchinfuso G."/>
            <person name="Radio F.C."/>
            <person name="Cecchetti S."/>
            <person name="Ciolfi A."/>
            <person name="Di Rocco M."/>
            <person name="Elting M.W."/>
            <person name="Brilstra E.H."/>
            <person name="Boni S."/>
            <person name="Mazzanti L."/>
            <person name="Tamburrino F."/>
            <person name="Walsh L."/>
            <person name="Payne K."/>
            <person name="Fernandez-Jaen A."/>
            <person name="Ganapathi M."/>
            <person name="Chung W.K."/>
            <person name="Grange D.K."/>
            <person name="Dave-Wala A."/>
            <person name="Reshmi S.C."/>
            <person name="Bartholomew D.W."/>
            <person name="Mouhlas D."/>
            <person name="Carpentieri G."/>
            <person name="Bruselles A."/>
            <person name="Pizzi S."/>
            <person name="Bellacchio E."/>
            <person name="Piceci-Sparascio F."/>
            <person name="Lissewski C."/>
            <person name="Brinkmann J."/>
            <person name="Waclaw R.R."/>
            <person name="Waisfisz Q."/>
            <person name="van Gassen K."/>
            <person name="Wentzensen I.M."/>
            <person name="Morrow M.M."/>
            <person name="Alvarez S."/>
            <person name="Martinez-Garcia M."/>
            <person name="De Luca A."/>
            <person name="Memo L."/>
            <person name="Zampino G."/>
            <person name="Rossi C."/>
            <person name="Seri M."/>
            <person name="Gelb B.D."/>
            <person name="Zenker M."/>
            <person name="Dallapiccola B."/>
            <person name="Stella L."/>
            <person name="Prada C.E."/>
            <person name="Martinelli S."/>
            <person name="Flex E."/>
            <person name="Tartaglia M."/>
        </authorList>
    </citation>
    <scope>INTERACTION WITH MAPK1</scope>
</reference>
<reference key="9">
    <citation type="journal article" date="2021" name="Cell Rep.">
        <title>Loss of FBXO31-mediated degradation of DUSP6 dysregulates ERK and PI3K-AKT signaling and promotes prostate tumorigenesis.</title>
        <authorList>
            <person name="Duan S."/>
            <person name="Moro L."/>
            <person name="Qu R."/>
            <person name="Simoneschi D."/>
            <person name="Cho H."/>
            <person name="Jiang S."/>
            <person name="Zhao H."/>
            <person name="Chang Q."/>
            <person name="de Stanchina E."/>
            <person name="Arbini A.A."/>
            <person name="Pagano M."/>
        </authorList>
    </citation>
    <scope>UBIQUITINATION</scope>
</reference>
<proteinExistence type="evidence at protein level"/>
<comment type="function">
    <text evidence="1 7 10">Dual specificity protein phosphatase, which mediates dephosphorylation and inactivation of MAP kinases (PubMed:8670865). Has a specificity for the ERK family (PubMed:8670865). Plays an important role in alleviating chronic postoperative pain (By similarity). Necessary for the normal dephosphorylation of the long-lasting phosphorylated forms of spinal MAPK1/3 and MAP kinase p38 induced by peripheral surgery, which drives the resolution of acute postoperative allodynia (By similarity). Also important for dephosphorylation of MAPK1/3 in local wound tissue, which further contributes to resolution of acute pain (By similarity). Promotes cell differentiation by regulating MAPK1/MAPK3 activity and regulating the expression of AP1 transcription factors (PubMed:29043977).</text>
</comment>
<comment type="catalytic activity">
    <reaction evidence="10">
        <text>O-phospho-L-tyrosyl-[protein] + H2O = L-tyrosyl-[protein] + phosphate</text>
        <dbReference type="Rhea" id="RHEA:10684"/>
        <dbReference type="Rhea" id="RHEA-COMP:10136"/>
        <dbReference type="Rhea" id="RHEA-COMP:20101"/>
        <dbReference type="ChEBI" id="CHEBI:15377"/>
        <dbReference type="ChEBI" id="CHEBI:43474"/>
        <dbReference type="ChEBI" id="CHEBI:46858"/>
        <dbReference type="ChEBI" id="CHEBI:61978"/>
        <dbReference type="EC" id="3.1.3.48"/>
    </reaction>
</comment>
<comment type="catalytic activity">
    <reaction evidence="10">
        <text>O-phospho-L-seryl-[protein] + H2O = L-seryl-[protein] + phosphate</text>
        <dbReference type="Rhea" id="RHEA:20629"/>
        <dbReference type="Rhea" id="RHEA-COMP:9863"/>
        <dbReference type="Rhea" id="RHEA-COMP:11604"/>
        <dbReference type="ChEBI" id="CHEBI:15377"/>
        <dbReference type="ChEBI" id="CHEBI:29999"/>
        <dbReference type="ChEBI" id="CHEBI:43474"/>
        <dbReference type="ChEBI" id="CHEBI:83421"/>
        <dbReference type="EC" id="3.1.3.16"/>
    </reaction>
</comment>
<comment type="catalytic activity">
    <reaction evidence="10">
        <text>O-phospho-L-threonyl-[protein] + H2O = L-threonyl-[protein] + phosphate</text>
        <dbReference type="Rhea" id="RHEA:47004"/>
        <dbReference type="Rhea" id="RHEA-COMP:11060"/>
        <dbReference type="Rhea" id="RHEA-COMP:11605"/>
        <dbReference type="ChEBI" id="CHEBI:15377"/>
        <dbReference type="ChEBI" id="CHEBI:30013"/>
        <dbReference type="ChEBI" id="CHEBI:43474"/>
        <dbReference type="ChEBI" id="CHEBI:61977"/>
        <dbReference type="EC" id="3.1.3.16"/>
    </reaction>
</comment>
<comment type="subunit">
    <text evidence="8">Interacts with MAPK1/ERK2.</text>
</comment>
<comment type="interaction">
    <interactant intactId="EBI-746870">
        <id>Q16828</id>
    </interactant>
    <interactant intactId="EBI-77613">
        <id>P05067</id>
        <label>APP</label>
    </interactant>
    <organismsDiffer>false</organismsDiffer>
    <experiments>3</experiments>
</comment>
<comment type="interaction">
    <interactant intactId="EBI-746870">
        <id>Q16828</id>
    </interactant>
    <interactant intactId="EBI-959949">
        <id>P28482</id>
        <label>MAPK1</label>
    </interactant>
    <organismsDiffer>false</organismsDiffer>
    <experiments>5</experiments>
</comment>
<comment type="interaction">
    <interactant intactId="EBI-746870">
        <id>Q16828</id>
    </interactant>
    <interactant intactId="EBI-73995">
        <id>P27361</id>
        <label>MAPK3</label>
    </interactant>
    <organismsDiffer>false</organismsDiffer>
    <experiments>5</experiments>
</comment>
<comment type="interaction">
    <interactant intactId="EBI-746870">
        <id>Q16828</id>
    </interactant>
    <interactant intactId="EBI-358348">
        <id>Q99623</id>
        <label>PHB2</label>
    </interactant>
    <organismsDiffer>false</organismsDiffer>
    <experiments>3</experiments>
</comment>
<comment type="interaction">
    <interactant intactId="EBI-746870">
        <id>Q16828</id>
    </interactant>
    <interactant intactId="EBI-7877438">
        <id>P42681</id>
        <label>TXK</label>
    </interactant>
    <organismsDiffer>false</organismsDiffer>
    <experiments>3</experiments>
</comment>
<comment type="subcellular location">
    <subcellularLocation>
        <location evidence="10">Cytoplasm</location>
    </subcellularLocation>
</comment>
<comment type="alternative products">
    <event type="alternative splicing"/>
    <isoform>
        <id>Q16828-1</id>
        <name>1</name>
        <sequence type="displayed"/>
    </isoform>
    <isoform>
        <id>Q16828-2</id>
        <name>2</name>
        <name>DUSP6-ALT</name>
        <sequence type="described" ref="VSP_005137"/>
    </isoform>
</comment>
<comment type="tissue specificity">
    <text evidence="7">Expressed in keratinocytes (at protein level).</text>
</comment>
<comment type="PTM">
    <text evidence="9">Ubiquitinated by the SCF(FBXO31) complex, leading to its proteasomal degradation.</text>
</comment>
<comment type="disease" evidence="6">
    <disease id="DI-03770">
        <name>Hypogonadotropic hypogonadism 19 with or without anosmia</name>
        <acronym>HH19</acronym>
        <description>A disorder characterized by absent or incomplete sexual maturation by the age of 18 years, in conjunction with low levels of circulating gonadotropins and testosterone and no other abnormalities of the hypothalamic-pituitary axis. In some cases, it is associated with non-reproductive phenotypes, such as anosmia, cleft palate, and sensorineural hearing loss. Anosmia or hyposmia is related to the absence or hypoplasia of the olfactory bulbs and tracts. Hypogonadism is due to deficiency in gonadotropin-releasing hormone and probably results from a failure of embryonic migration of gonadotropin-releasing hormone-synthesizing neurons. In the presence of anosmia, idiopathic hypogonadotropic hypogonadism is referred to as Kallmann syndrome, whereas in the presence of a normal sense of smell, it has been termed normosmic idiopathic hypogonadotropic hypogonadism (nIHH).</description>
        <dbReference type="MIM" id="615269"/>
    </disease>
    <text evidence="6">The disease is caused by variants affecting distinct genetic loci, including the gene represented in this entry. Some patients carrying mutations in DUSP6 also have a heterozygous mutation in another HH-associated gene including FGFR1 and SPRY4 (PubMed:23643382).</text>
</comment>
<comment type="similarity">
    <text evidence="14">Belongs to the protein-tyrosine phosphatase family. Non-receptor class dual specificity subfamily.</text>
</comment>
<comment type="online information" name="Atlas of Genetics and Cytogenetics in Oncology and Haematology">
    <link uri="https://atlasgeneticsoncology.org/gene/46105/DUSP6"/>
</comment>